<evidence type="ECO:0000255" key="1"/>
<evidence type="ECO:0000269" key="2">
    <source>
    </source>
</evidence>
<evidence type="ECO:0000269" key="3">
    <source>
    </source>
</evidence>
<evidence type="ECO:0000303" key="4">
    <source>
    </source>
</evidence>
<evidence type="ECO:0000303" key="5">
    <source>
    </source>
</evidence>
<evidence type="ECO:0000305" key="6"/>
<evidence type="ECO:0000312" key="7">
    <source>
        <dbReference type="Araport" id="AT5G05580"/>
    </source>
</evidence>
<evidence type="ECO:0000312" key="8">
    <source>
        <dbReference type="EMBL" id="AED90892.1"/>
    </source>
</evidence>
<proteinExistence type="evidence at protein level"/>
<keyword id="KW-0025">Alternative splicing</keyword>
<keyword id="KW-0150">Chloroplast</keyword>
<keyword id="KW-0275">Fatty acid biosynthesis</keyword>
<keyword id="KW-0276">Fatty acid metabolism</keyword>
<keyword id="KW-0444">Lipid biosynthesis</keyword>
<keyword id="KW-0443">Lipid metabolism</keyword>
<keyword id="KW-0472">Membrane</keyword>
<keyword id="KW-0560">Oxidoreductase</keyword>
<keyword id="KW-0934">Plastid</keyword>
<keyword id="KW-1185">Reference proteome</keyword>
<keyword id="KW-0809">Transit peptide</keyword>
<keyword id="KW-0812">Transmembrane</keyword>
<keyword id="KW-1133">Transmembrane helix</keyword>
<protein>
    <recommendedName>
        <fullName evidence="4">Temperature-sensitive sn-2 acyl-lipid omega-3 desaturase (ferredoxin), chloroplastic</fullName>
        <ecNumber evidence="4">1.14.19.35</ecNumber>
    </recommendedName>
    <alternativeName>
        <fullName evidence="5">Temperature-sensitive omega-3 fatty acid desaturase 8, chloroplastic</fullName>
    </alternativeName>
</protein>
<accession>P48622</accession>
<dbReference type="EC" id="1.14.19.35" evidence="4"/>
<dbReference type="EMBL" id="L27158">
    <property type="protein sequence ID" value="AAA65621.1"/>
    <property type="molecule type" value="mRNA"/>
</dbReference>
<dbReference type="EMBL" id="U08216">
    <property type="protein sequence ID" value="AAB60302.1"/>
    <property type="molecule type" value="Genomic_DNA"/>
</dbReference>
<dbReference type="EMBL" id="D17578">
    <property type="protein sequence ID" value="BAA04504.1"/>
    <property type="molecule type" value="mRNA"/>
</dbReference>
<dbReference type="EMBL" id="AB005241">
    <property type="protein sequence ID" value="BAB11547.1"/>
    <property type="molecule type" value="Genomic_DNA"/>
</dbReference>
<dbReference type="EMBL" id="CP002688">
    <property type="protein sequence ID" value="AED90892.1"/>
    <property type="molecule type" value="Genomic_DNA"/>
</dbReference>
<dbReference type="EMBL" id="AF361837">
    <property type="protein sequence ID" value="AAK32849.1"/>
    <property type="molecule type" value="mRNA"/>
</dbReference>
<dbReference type="EMBL" id="AY078043">
    <property type="protein sequence ID" value="AAL77744.1"/>
    <property type="molecule type" value="mRNA"/>
</dbReference>
<dbReference type="RefSeq" id="NP_196177.1">
    <molecule id="P48622-1"/>
    <property type="nucleotide sequence ID" value="NM_120640.4"/>
</dbReference>
<dbReference type="SMR" id="P48622"/>
<dbReference type="BioGRID" id="15720">
    <property type="interactions" value="2"/>
</dbReference>
<dbReference type="FunCoup" id="P48622">
    <property type="interactions" value="604"/>
</dbReference>
<dbReference type="STRING" id="3702.P48622"/>
<dbReference type="PaxDb" id="3702-AT5G05580.1"/>
<dbReference type="ProteomicsDB" id="222315">
    <molecule id="P48622-1"/>
</dbReference>
<dbReference type="EnsemblPlants" id="AT5G05580.1">
    <molecule id="P48622-1"/>
    <property type="protein sequence ID" value="AT5G05580.1"/>
    <property type="gene ID" value="AT5G05580"/>
</dbReference>
<dbReference type="GeneID" id="830441"/>
<dbReference type="Gramene" id="AT5G05580.1">
    <molecule id="P48622-1"/>
    <property type="protein sequence ID" value="AT5G05580.1"/>
    <property type="gene ID" value="AT5G05580"/>
</dbReference>
<dbReference type="KEGG" id="ath:AT5G05580"/>
<dbReference type="Araport" id="AT5G05580"/>
<dbReference type="TAIR" id="AT5G05580">
    <property type="gene designation" value="FAD8"/>
</dbReference>
<dbReference type="eggNOG" id="ENOG502QQQ2">
    <property type="taxonomic scope" value="Eukaryota"/>
</dbReference>
<dbReference type="InParanoid" id="P48622"/>
<dbReference type="OMA" id="NSVMGHI"/>
<dbReference type="OrthoDB" id="1461976at2759"/>
<dbReference type="PhylomeDB" id="P48622"/>
<dbReference type="BioCyc" id="ARA:AT5G05580-MONOMER"/>
<dbReference type="BioCyc" id="MetaCyc:AT5G05580-MONOMER"/>
<dbReference type="BRENDA" id="1.14.19.35">
    <property type="organism ID" value="399"/>
</dbReference>
<dbReference type="BRENDA" id="1.14.19.36">
    <property type="organism ID" value="399"/>
</dbReference>
<dbReference type="UniPathway" id="UPA00658"/>
<dbReference type="PRO" id="PR:P48622"/>
<dbReference type="Proteomes" id="UP000006548">
    <property type="component" value="Chromosome 5"/>
</dbReference>
<dbReference type="ExpressionAtlas" id="P48622">
    <property type="expression patterns" value="baseline and differential"/>
</dbReference>
<dbReference type="GO" id="GO:0009507">
    <property type="term" value="C:chloroplast"/>
    <property type="evidence" value="ECO:0000250"/>
    <property type="project" value="TAIR"/>
</dbReference>
<dbReference type="GO" id="GO:0009941">
    <property type="term" value="C:chloroplast envelope"/>
    <property type="evidence" value="ECO:0007005"/>
    <property type="project" value="TAIR"/>
</dbReference>
<dbReference type="GO" id="GO:0031969">
    <property type="term" value="C:chloroplast membrane"/>
    <property type="evidence" value="ECO:0007669"/>
    <property type="project" value="UniProtKB-SubCell"/>
</dbReference>
<dbReference type="GO" id="GO:0005886">
    <property type="term" value="C:plasma membrane"/>
    <property type="evidence" value="ECO:0007005"/>
    <property type="project" value="TAIR"/>
</dbReference>
<dbReference type="GO" id="GO:0042389">
    <property type="term" value="F:omega-3 fatty acid desaturase activity"/>
    <property type="evidence" value="ECO:0000315"/>
    <property type="project" value="TAIR"/>
</dbReference>
<dbReference type="GO" id="GO:0102993">
    <property type="term" value="F:sn-2 acyl-lipid omega-3 desaturase (ferredoxin) activity"/>
    <property type="evidence" value="ECO:0007669"/>
    <property type="project" value="UniProtKB-EC"/>
</dbReference>
<dbReference type="GO" id="GO:0006633">
    <property type="term" value="P:fatty acid biosynthetic process"/>
    <property type="evidence" value="ECO:0000315"/>
    <property type="project" value="TAIR"/>
</dbReference>
<dbReference type="GO" id="GO:0006636">
    <property type="term" value="P:unsaturated fatty acid biosynthetic process"/>
    <property type="evidence" value="ECO:0007669"/>
    <property type="project" value="UniProtKB-UniPathway"/>
</dbReference>
<dbReference type="CDD" id="cd03507">
    <property type="entry name" value="Delta12-FADS-like"/>
    <property type="match status" value="1"/>
</dbReference>
<dbReference type="InterPro" id="IPR005804">
    <property type="entry name" value="FA_desaturase_dom"/>
</dbReference>
<dbReference type="InterPro" id="IPR021863">
    <property type="entry name" value="FAS_N"/>
</dbReference>
<dbReference type="InterPro" id="IPR012171">
    <property type="entry name" value="Fatty_acid_desaturase"/>
</dbReference>
<dbReference type="PANTHER" id="PTHR32100">
    <property type="entry name" value="OMEGA-6 FATTY ACID DESATURASE, CHLOROPLASTIC"/>
    <property type="match status" value="1"/>
</dbReference>
<dbReference type="Pfam" id="PF11960">
    <property type="entry name" value="DUF3474"/>
    <property type="match status" value="1"/>
</dbReference>
<dbReference type="Pfam" id="PF00487">
    <property type="entry name" value="FA_desaturase"/>
    <property type="match status" value="1"/>
</dbReference>
<sequence>MASSVLSECGFRPLPRFYPKHTTSFASNPKPTFKFNPPLKPPSSLLNSRYGFYSKTRNWALNVATPLTTLQSPSEEDTERFDPGAPPPFNLADIRAAIPKHCWVKNPWMSMSYVVRDVAIVFGLAAVAAYFNNWLLWPLYWFAQGTMFWALFVLGHDCGHGSFSNDPRLNSVAGHLLHSSILVPYHGWRISHRTHHQNHGHVENDESWHPLPESIYKNLEKTTQMFRFTLPFPMLAYPFYLWNRSPGKQGSHYHPDSDLFLPKEKKDVLTSTACWTAMAALLVCLNFVMGPIQMLKLYGIPYWIFVMWLDFVTYLHHHGHEDKLPWYRGKEWSYLRGGLTTLDRDYGWINNIHHDIGTHVIHHLFPQIPHYHLVEATEAAKPVLGKYYREPKNSGPLPLHLLGSLIKSMKQDHFVSDTGDVVYYEADPKLNGQRT</sequence>
<comment type="function">
    <text evidence="3">Chloroplast omega-3 fatty acid desaturase introduces the third double bond in the biosynthesis of 16:3 and 18:3 fatty acids, important constituents of plant membranes. It is thought to use ferredoxin as an electron donor and to act on fatty acids esterified to galactolipids, sulfolipids and phosphatidylglycerol.</text>
</comment>
<comment type="catalytic activity">
    <reaction evidence="2">
        <text>a (7Z,10Z)-hexadecadienoyl-containing glycerolipid + 2 reduced [2Fe-2S]-[ferredoxin] + O2 + 2 H(+) = a (7Z,10Z,13Z)-hexadecatrienoyl-containing glycerolipid + 2 oxidized [2Fe-2S]-[ferredoxin] + 2 H2O</text>
        <dbReference type="Rhea" id="RHEA:46412"/>
        <dbReference type="Rhea" id="RHEA-COMP:10000"/>
        <dbReference type="Rhea" id="RHEA-COMP:10001"/>
        <dbReference type="ChEBI" id="CHEBI:15377"/>
        <dbReference type="ChEBI" id="CHEBI:15378"/>
        <dbReference type="ChEBI" id="CHEBI:15379"/>
        <dbReference type="ChEBI" id="CHEBI:33737"/>
        <dbReference type="ChEBI" id="CHEBI:33738"/>
        <dbReference type="ChEBI" id="CHEBI:88268"/>
        <dbReference type="ChEBI" id="CHEBI:88269"/>
        <dbReference type="EC" id="1.14.19.35"/>
    </reaction>
</comment>
<comment type="catalytic activity">
    <reaction evidence="2">
        <text>a (9Z,12Z)-octadecadienoyl-containing glycerolipid + 2 reduced [2Fe-2S]-[ferredoxin] + O2 + 2 H(+) = (9Z,12Z,15Z)-octadecatrienoyl-containing glycerolipid + 2 oxidized [2Fe-2S]-[ferredoxin] + 2 H2O</text>
        <dbReference type="Rhea" id="RHEA:46408"/>
        <dbReference type="Rhea" id="RHEA-COMP:10000"/>
        <dbReference type="Rhea" id="RHEA-COMP:10001"/>
        <dbReference type="ChEBI" id="CHEBI:15377"/>
        <dbReference type="ChEBI" id="CHEBI:15378"/>
        <dbReference type="ChEBI" id="CHEBI:15379"/>
        <dbReference type="ChEBI" id="CHEBI:33737"/>
        <dbReference type="ChEBI" id="CHEBI:33738"/>
        <dbReference type="ChEBI" id="CHEBI:88351"/>
        <dbReference type="ChEBI" id="CHEBI:90078"/>
        <dbReference type="EC" id="1.14.19.35"/>
    </reaction>
</comment>
<comment type="pathway">
    <text evidence="3">Lipid metabolism; polyunsaturated fatty acid biosynthesis.</text>
</comment>
<comment type="subcellular location">
    <subcellularLocation>
        <location evidence="6">Plastid</location>
        <location evidence="6">Chloroplast membrane</location>
        <topology evidence="6">Multi-pass membrane protein</topology>
    </subcellularLocation>
</comment>
<comment type="alternative products">
    <event type="alternative splicing"/>
    <isoform>
        <id>P48622-1</id>
        <name>1</name>
        <sequence type="displayed"/>
    </isoform>
    <text evidence="6">A number of isoforms are produced. According to EST sequences.</text>
</comment>
<comment type="induction">
    <text evidence="3">By low temperature.</text>
</comment>
<comment type="domain">
    <text evidence="6">The histidine box domains may contain the active site and/or be involved in metal ion binding.</text>
</comment>
<comment type="similarity">
    <text evidence="6">Belongs to the fatty acid desaturase type 1 family.</text>
</comment>
<reference key="1">
    <citation type="journal article" date="1994" name="Plant Physiol.">
        <title>Cloning of a temperature-regulated gene encoding a chloroplast omega-3 desaturase from Arabidopsis thaliana.</title>
        <authorList>
            <person name="Gibson S."/>
            <person name="Arondel V."/>
            <person name="Iba K."/>
            <person name="Somerville C.R."/>
        </authorList>
    </citation>
    <scope>NUCLEOTIDE SEQUENCE [GENOMIC DNA / MRNA]</scope>
    <scope>FUNCTION</scope>
    <scope>INDUCTION BY COLD</scope>
    <source>
        <strain>cv. Columbia</strain>
        <tissue>Aerial part</tissue>
    </source>
</reference>
<reference key="2">
    <citation type="journal article" date="1994" name="Plant Physiol.">
        <title>A new isozyme of plastid omega-3 fatty acid desaturase in Arabidopsis thaliana.</title>
        <authorList>
            <person name="Watahiki M.C."/>
            <person name="Yamamoto K.T."/>
        </authorList>
    </citation>
    <scope>NUCLEOTIDE SEQUENCE [MRNA]</scope>
    <source>
        <strain>cv. Columbia</strain>
        <tissue>Hypocotyl</tissue>
    </source>
</reference>
<reference key="3">
    <citation type="journal article" date="1997" name="DNA Res.">
        <title>Structural analysis of Arabidopsis thaliana chromosome 5. I. Sequence features of the 1.6 Mb regions covered by twenty physically assigned P1 clones.</title>
        <authorList>
            <person name="Sato S."/>
            <person name="Kotani H."/>
            <person name="Nakamura Y."/>
            <person name="Kaneko T."/>
            <person name="Asamizu E."/>
            <person name="Fukami M."/>
            <person name="Miyajima N."/>
            <person name="Tabata S."/>
        </authorList>
    </citation>
    <scope>NUCLEOTIDE SEQUENCE [LARGE SCALE GENOMIC DNA]</scope>
    <source>
        <strain>cv. Columbia</strain>
    </source>
</reference>
<reference key="4">
    <citation type="journal article" date="2017" name="Plant J.">
        <title>Araport11: a complete reannotation of the Arabidopsis thaliana reference genome.</title>
        <authorList>
            <person name="Cheng C.Y."/>
            <person name="Krishnakumar V."/>
            <person name="Chan A.P."/>
            <person name="Thibaud-Nissen F."/>
            <person name="Schobel S."/>
            <person name="Town C.D."/>
        </authorList>
    </citation>
    <scope>GENOME REANNOTATION</scope>
    <source>
        <strain>cv. Columbia</strain>
    </source>
</reference>
<reference key="5">
    <citation type="journal article" date="2003" name="Science">
        <title>Empirical analysis of transcriptional activity in the Arabidopsis genome.</title>
        <authorList>
            <person name="Yamada K."/>
            <person name="Lim J."/>
            <person name="Dale J.M."/>
            <person name="Chen H."/>
            <person name="Shinn P."/>
            <person name="Palm C.J."/>
            <person name="Southwick A.M."/>
            <person name="Wu H.C."/>
            <person name="Kim C.J."/>
            <person name="Nguyen M."/>
            <person name="Pham P.K."/>
            <person name="Cheuk R.F."/>
            <person name="Karlin-Newmann G."/>
            <person name="Liu S.X."/>
            <person name="Lam B."/>
            <person name="Sakano H."/>
            <person name="Wu T."/>
            <person name="Yu G."/>
            <person name="Miranda M."/>
            <person name="Quach H.L."/>
            <person name="Tripp M."/>
            <person name="Chang C.H."/>
            <person name="Lee J.M."/>
            <person name="Toriumi M.J."/>
            <person name="Chan M.M."/>
            <person name="Tang C.C."/>
            <person name="Onodera C.S."/>
            <person name="Deng J.M."/>
            <person name="Akiyama K."/>
            <person name="Ansari Y."/>
            <person name="Arakawa T."/>
            <person name="Banh J."/>
            <person name="Banno F."/>
            <person name="Bowser L."/>
            <person name="Brooks S.Y."/>
            <person name="Carninci P."/>
            <person name="Chao Q."/>
            <person name="Choy N."/>
            <person name="Enju A."/>
            <person name="Goldsmith A.D."/>
            <person name="Gurjal M."/>
            <person name="Hansen N.F."/>
            <person name="Hayashizaki Y."/>
            <person name="Johnson-Hopson C."/>
            <person name="Hsuan V.W."/>
            <person name="Iida K."/>
            <person name="Karnes M."/>
            <person name="Khan S."/>
            <person name="Koesema E."/>
            <person name="Ishida J."/>
            <person name="Jiang P.X."/>
            <person name="Jones T."/>
            <person name="Kawai J."/>
            <person name="Kamiya A."/>
            <person name="Meyers C."/>
            <person name="Nakajima M."/>
            <person name="Narusaka M."/>
            <person name="Seki M."/>
            <person name="Sakurai T."/>
            <person name="Satou M."/>
            <person name="Tamse R."/>
            <person name="Vaysberg M."/>
            <person name="Wallender E.K."/>
            <person name="Wong C."/>
            <person name="Yamamura Y."/>
            <person name="Yuan S."/>
            <person name="Shinozaki K."/>
            <person name="Davis R.W."/>
            <person name="Theologis A."/>
            <person name="Ecker J.R."/>
        </authorList>
    </citation>
    <scope>NUCLEOTIDE SEQUENCE [LARGE SCALE MRNA]</scope>
    <source>
        <strain>cv. Columbia</strain>
    </source>
</reference>
<reference key="6">
    <citation type="journal article" date="1994" name="Plant Physiol.">
        <title>A Mutation at the fad8 Locus of Arabidopsis Identifies a Second Chloroplast [omega]-3 Desaturase.</title>
        <authorList>
            <person name="McConn M."/>
            <person name="Hugly S."/>
            <person name="Browse J."/>
            <person name="Somerville C."/>
        </authorList>
    </citation>
    <scope>FUNCTION</scope>
    <scope>PATHWAY</scope>
    <scope>CATALYTIC ACTIVITY</scope>
</reference>
<name>FAD3D_ARATH</name>
<gene>
    <name evidence="5" type="primary">FAD8</name>
    <name evidence="7" type="ordered locus">At5g05580</name>
    <name evidence="8" type="ORF">MOP10.12</name>
</gene>
<feature type="transit peptide" description="Chloroplast" evidence="1">
    <location>
        <begin position="1"/>
        <end position="42"/>
    </location>
</feature>
<feature type="chain" id="PRO_0000007122" description="Temperature-sensitive sn-2 acyl-lipid omega-3 desaturase (ferredoxin), chloroplastic" evidence="1">
    <location>
        <begin position="43"/>
        <end position="435"/>
    </location>
</feature>
<feature type="transmembrane region" description="Helical" evidence="1">
    <location>
        <begin position="111"/>
        <end position="131"/>
    </location>
</feature>
<feature type="transmembrane region" description="Helical" evidence="1">
    <location>
        <begin position="134"/>
        <end position="154"/>
    </location>
</feature>
<feature type="transmembrane region" description="Helical" evidence="1">
    <location>
        <begin position="268"/>
        <end position="290"/>
    </location>
</feature>
<feature type="transmembrane region" description="Helical" evidence="1">
    <location>
        <begin position="297"/>
        <end position="319"/>
    </location>
</feature>
<feature type="short sequence motif" description="Histidine box-1" evidence="6">
    <location>
        <begin position="156"/>
        <end position="160"/>
    </location>
</feature>
<feature type="short sequence motif" description="Histidine box-2" evidence="6">
    <location>
        <begin position="192"/>
        <end position="196"/>
    </location>
</feature>
<feature type="short sequence motif" description="Histidine box-3" evidence="6">
    <location>
        <begin position="359"/>
        <end position="363"/>
    </location>
</feature>
<organism>
    <name type="scientific">Arabidopsis thaliana</name>
    <name type="common">Mouse-ear cress</name>
    <dbReference type="NCBI Taxonomy" id="3702"/>
    <lineage>
        <taxon>Eukaryota</taxon>
        <taxon>Viridiplantae</taxon>
        <taxon>Streptophyta</taxon>
        <taxon>Embryophyta</taxon>
        <taxon>Tracheophyta</taxon>
        <taxon>Spermatophyta</taxon>
        <taxon>Magnoliopsida</taxon>
        <taxon>eudicotyledons</taxon>
        <taxon>Gunneridae</taxon>
        <taxon>Pentapetalae</taxon>
        <taxon>rosids</taxon>
        <taxon>malvids</taxon>
        <taxon>Brassicales</taxon>
        <taxon>Brassicaceae</taxon>
        <taxon>Camelineae</taxon>
        <taxon>Arabidopsis</taxon>
    </lineage>
</organism>